<sequence length="357" mass="41466">MAPRRVRSFLRGLPALLLLLLFLGPWPAASHGGKYSREKNQPKPSPKRESGEEFRMEKLNQLWEKAQRLHLPPVRLAELHADLKIQERDELAWKKLKLDGLDEDGEKEARLIRNLNVILAKYGLDGKKDARQVTSNSLSGTQEDGLDDPRLEKLWHKAKTSGKFSGEELDKLWREFLHHKEKVHEYNVLLETLSRTEEIHENVISPSDLSDIKGSVLHSRHTELKEKLRSINQGLDRLRRVSHQGYSTEAEFEEPRVIDLWDLAQSANLTDKELEAFREELKHFEAKIEKHNHYQKQLEIAHEKLRHAESVGDGERVSRSREKHALLEGRTKELGYTVKKHLQDLSGRISRARHNEL</sequence>
<dbReference type="EMBL" id="M63959">
    <property type="protein sequence ID" value="AAA51553.1"/>
    <property type="molecule type" value="mRNA"/>
</dbReference>
<dbReference type="EMBL" id="AF035767">
    <property type="protein sequence ID" value="AAC67373.1"/>
    <property type="molecule type" value="Genomic_DNA"/>
</dbReference>
<dbReference type="EMBL" id="AF035760">
    <property type="protein sequence ID" value="AAC67373.1"/>
    <property type="status" value="JOINED"/>
    <property type="molecule type" value="Genomic_DNA"/>
</dbReference>
<dbReference type="EMBL" id="AF035761">
    <property type="protein sequence ID" value="AAC67373.1"/>
    <property type="status" value="JOINED"/>
    <property type="molecule type" value="Genomic_DNA"/>
</dbReference>
<dbReference type="EMBL" id="AF035762">
    <property type="protein sequence ID" value="AAC67373.1"/>
    <property type="status" value="JOINED"/>
    <property type="molecule type" value="Genomic_DNA"/>
</dbReference>
<dbReference type="EMBL" id="AF035763">
    <property type="protein sequence ID" value="AAC67373.1"/>
    <property type="status" value="JOINED"/>
    <property type="molecule type" value="Genomic_DNA"/>
</dbReference>
<dbReference type="EMBL" id="AF035764">
    <property type="protein sequence ID" value="AAC67373.1"/>
    <property type="status" value="JOINED"/>
    <property type="molecule type" value="Genomic_DNA"/>
</dbReference>
<dbReference type="EMBL" id="AF035765">
    <property type="protein sequence ID" value="AAC67373.1"/>
    <property type="status" value="JOINED"/>
    <property type="molecule type" value="Genomic_DNA"/>
</dbReference>
<dbReference type="EMBL" id="AF035766">
    <property type="protein sequence ID" value="AAC67373.1"/>
    <property type="status" value="JOINED"/>
    <property type="molecule type" value="Genomic_DNA"/>
</dbReference>
<dbReference type="EMBL" id="AK222504">
    <property type="protein sequence ID" value="BAD96224.1"/>
    <property type="molecule type" value="mRNA"/>
</dbReference>
<dbReference type="EMBL" id="AK222527">
    <property type="protein sequence ID" value="BAD96247.1"/>
    <property type="molecule type" value="mRNA"/>
</dbReference>
<dbReference type="EMBL" id="AL590235">
    <property type="status" value="NOT_ANNOTATED_CDS"/>
    <property type="molecule type" value="Genomic_DNA"/>
</dbReference>
<dbReference type="EMBL" id="CH471131">
    <property type="protein sequence ID" value="EAW82460.1"/>
    <property type="molecule type" value="Genomic_DNA"/>
</dbReference>
<dbReference type="EMBL" id="CH471131">
    <property type="protein sequence ID" value="EAW82461.1"/>
    <property type="molecule type" value="Genomic_DNA"/>
</dbReference>
<dbReference type="EMBL" id="BC105074">
    <property type="protein sequence ID" value="AAI05075.1"/>
    <property type="molecule type" value="mRNA"/>
</dbReference>
<dbReference type="EMBL" id="BC112067">
    <property type="protein sequence ID" value="AAI12068.1"/>
    <property type="molecule type" value="mRNA"/>
</dbReference>
<dbReference type="EMBL" id="U06976">
    <property type="protein sequence ID" value="AAA87889.1"/>
    <property type="molecule type" value="Genomic_DNA"/>
</dbReference>
<dbReference type="CCDS" id="CCDS3371.1"/>
<dbReference type="PIR" id="A39875">
    <property type="entry name" value="A39875"/>
</dbReference>
<dbReference type="RefSeq" id="NP_002328.1">
    <property type="nucleotide sequence ID" value="NM_002337.4"/>
</dbReference>
<dbReference type="PDB" id="1LRE">
    <property type="method" value="NMR"/>
    <property type="chains" value="A=51-131"/>
</dbReference>
<dbReference type="PDB" id="1NRE">
    <property type="method" value="NMR"/>
    <property type="chains" value="A=51-131"/>
</dbReference>
<dbReference type="PDB" id="1OP1">
    <property type="method" value="NMR"/>
    <property type="chains" value="A=51-132"/>
</dbReference>
<dbReference type="PDB" id="1OV2">
    <property type="method" value="NMR"/>
    <property type="chains" value="A=35-133"/>
</dbReference>
<dbReference type="PDB" id="2FCW">
    <property type="method" value="X-ray"/>
    <property type="resolution" value="1.26 A"/>
    <property type="chains" value="A=249-357"/>
</dbReference>
<dbReference type="PDB" id="2FTU">
    <property type="method" value="NMR"/>
    <property type="chains" value="A=240-357"/>
</dbReference>
<dbReference type="PDB" id="2FYL">
    <property type="method" value="NMR"/>
    <property type="chains" value="A=51-131"/>
</dbReference>
<dbReference type="PDB" id="2P01">
    <property type="method" value="NMR"/>
    <property type="chains" value="A=35-357"/>
</dbReference>
<dbReference type="PDB" id="2P03">
    <property type="method" value="NMR"/>
    <property type="chains" value="A=35-357"/>
</dbReference>
<dbReference type="PDBsum" id="1LRE"/>
<dbReference type="PDBsum" id="1NRE"/>
<dbReference type="PDBsum" id="1OP1"/>
<dbReference type="PDBsum" id="1OV2"/>
<dbReference type="PDBsum" id="2FCW"/>
<dbReference type="PDBsum" id="2FTU"/>
<dbReference type="PDBsum" id="2FYL"/>
<dbReference type="PDBsum" id="2P01"/>
<dbReference type="PDBsum" id="2P03"/>
<dbReference type="BMRB" id="P30533"/>
<dbReference type="SMR" id="P30533"/>
<dbReference type="BioGRID" id="110221">
    <property type="interactions" value="184"/>
</dbReference>
<dbReference type="DIP" id="DIP-39355N"/>
<dbReference type="FunCoup" id="P30533">
    <property type="interactions" value="927"/>
</dbReference>
<dbReference type="IntAct" id="P30533">
    <property type="interactions" value="61"/>
</dbReference>
<dbReference type="MINT" id="P30533"/>
<dbReference type="STRING" id="9606.ENSP00000497444"/>
<dbReference type="GlyConnect" id="1004">
    <property type="glycosylation" value="12 N-Linked glycans (1 site)"/>
</dbReference>
<dbReference type="GlyCosmos" id="P30533">
    <property type="glycosylation" value="1 site, 11 glycans"/>
</dbReference>
<dbReference type="GlyGen" id="P30533">
    <property type="glycosylation" value="10 sites, 89 N-linked glycans (1 site), 2 O-linked glycans (9 sites)"/>
</dbReference>
<dbReference type="iPTMnet" id="P30533"/>
<dbReference type="PhosphoSitePlus" id="P30533"/>
<dbReference type="BioMuta" id="LRPAP1"/>
<dbReference type="DMDM" id="231539"/>
<dbReference type="jPOST" id="P30533"/>
<dbReference type="MassIVE" id="P30533"/>
<dbReference type="PaxDb" id="9606-ENSP00000421922"/>
<dbReference type="PeptideAtlas" id="P30533"/>
<dbReference type="ProteomicsDB" id="54716"/>
<dbReference type="Pumba" id="P30533"/>
<dbReference type="TopDownProteomics" id="P30533"/>
<dbReference type="Antibodypedia" id="1334">
    <property type="antibodies" value="488 antibodies from 32 providers"/>
</dbReference>
<dbReference type="DNASU" id="4043"/>
<dbReference type="Ensembl" id="ENST00000650182.1">
    <property type="protein sequence ID" value="ENSP00000497444.1"/>
    <property type="gene ID" value="ENSG00000163956.13"/>
</dbReference>
<dbReference type="GeneID" id="4043"/>
<dbReference type="KEGG" id="hsa:4043"/>
<dbReference type="MANE-Select" id="ENST00000650182.1">
    <property type="protein sequence ID" value="ENSP00000497444.1"/>
    <property type="RefSeq nucleotide sequence ID" value="NM_002337.4"/>
    <property type="RefSeq protein sequence ID" value="NP_002328.1"/>
</dbReference>
<dbReference type="UCSC" id="uc003ghh.5">
    <property type="organism name" value="human"/>
</dbReference>
<dbReference type="AGR" id="HGNC:6701"/>
<dbReference type="CTD" id="4043"/>
<dbReference type="DisGeNET" id="4043"/>
<dbReference type="GeneCards" id="LRPAP1"/>
<dbReference type="HGNC" id="HGNC:6701">
    <property type="gene designation" value="LRPAP1"/>
</dbReference>
<dbReference type="HPA" id="ENSG00000163956">
    <property type="expression patterns" value="Low tissue specificity"/>
</dbReference>
<dbReference type="MalaCards" id="LRPAP1"/>
<dbReference type="MIM" id="104225">
    <property type="type" value="gene"/>
</dbReference>
<dbReference type="MIM" id="615431">
    <property type="type" value="phenotype"/>
</dbReference>
<dbReference type="neXtProt" id="NX_P30533"/>
<dbReference type="OpenTargets" id="ENSG00000163956"/>
<dbReference type="Orphanet" id="98619">
    <property type="disease" value="Rare isolated myopia"/>
</dbReference>
<dbReference type="PharmGKB" id="PA30458"/>
<dbReference type="VEuPathDB" id="HostDB:ENSG00000163956"/>
<dbReference type="eggNOG" id="KOG3956">
    <property type="taxonomic scope" value="Eukaryota"/>
</dbReference>
<dbReference type="GeneTree" id="ENSGT00390000004855"/>
<dbReference type="HOGENOM" id="CLU_064512_0_0_1"/>
<dbReference type="InParanoid" id="P30533"/>
<dbReference type="OMA" id="QEFEHHQ"/>
<dbReference type="OrthoDB" id="5817428at2759"/>
<dbReference type="PAN-GO" id="P30533">
    <property type="GO annotations" value="12 GO annotations based on evolutionary models"/>
</dbReference>
<dbReference type="PhylomeDB" id="P30533"/>
<dbReference type="TreeFam" id="TF320678"/>
<dbReference type="PathwayCommons" id="P30533"/>
<dbReference type="SignaLink" id="P30533"/>
<dbReference type="BioGRID-ORCS" id="4043">
    <property type="hits" value="16 hits in 1152 CRISPR screens"/>
</dbReference>
<dbReference type="ChiTaRS" id="LRPAP1">
    <property type="organism name" value="human"/>
</dbReference>
<dbReference type="EvolutionaryTrace" id="P30533"/>
<dbReference type="GeneWiki" id="LDL-receptor-related_protein_associated_protein"/>
<dbReference type="GenomeRNAi" id="4043"/>
<dbReference type="Pharos" id="P30533">
    <property type="development level" value="Tbio"/>
</dbReference>
<dbReference type="PRO" id="PR:P30533"/>
<dbReference type="Proteomes" id="UP000005640">
    <property type="component" value="Chromosome 4"/>
</dbReference>
<dbReference type="RNAct" id="P30533">
    <property type="molecule type" value="protein"/>
</dbReference>
<dbReference type="Bgee" id="ENSG00000163956">
    <property type="expression patterns" value="Expressed in stromal cell of endometrium and 208 other cell types or tissues"/>
</dbReference>
<dbReference type="ExpressionAtlas" id="P30533">
    <property type="expression patterns" value="baseline and differential"/>
</dbReference>
<dbReference type="GO" id="GO:0009986">
    <property type="term" value="C:cell surface"/>
    <property type="evidence" value="ECO:0007669"/>
    <property type="project" value="UniProtKB-SubCell"/>
</dbReference>
<dbReference type="GO" id="GO:0005801">
    <property type="term" value="C:cis-Golgi network"/>
    <property type="evidence" value="ECO:0000314"/>
    <property type="project" value="UniProtKB"/>
</dbReference>
<dbReference type="GO" id="GO:0012505">
    <property type="term" value="C:endomembrane system"/>
    <property type="evidence" value="ECO:0000318"/>
    <property type="project" value="GO_Central"/>
</dbReference>
<dbReference type="GO" id="GO:0005783">
    <property type="term" value="C:endoplasmic reticulum"/>
    <property type="evidence" value="ECO:0000314"/>
    <property type="project" value="HPA"/>
</dbReference>
<dbReference type="GO" id="GO:0005793">
    <property type="term" value="C:endoplasmic reticulum-Golgi intermediate compartment"/>
    <property type="evidence" value="ECO:0000314"/>
    <property type="project" value="UniProtKB"/>
</dbReference>
<dbReference type="GO" id="GO:0005768">
    <property type="term" value="C:endosome"/>
    <property type="evidence" value="ECO:0000314"/>
    <property type="project" value="UniProtKB"/>
</dbReference>
<dbReference type="GO" id="GO:0031904">
    <property type="term" value="C:endosome lumen"/>
    <property type="evidence" value="ECO:0007669"/>
    <property type="project" value="UniProtKB-SubCell"/>
</dbReference>
<dbReference type="GO" id="GO:0005576">
    <property type="term" value="C:extracellular region"/>
    <property type="evidence" value="ECO:0000304"/>
    <property type="project" value="ParkinsonsUK-UCL"/>
</dbReference>
<dbReference type="GO" id="GO:0005794">
    <property type="term" value="C:Golgi apparatus"/>
    <property type="evidence" value="ECO:0000314"/>
    <property type="project" value="UniProtKB"/>
</dbReference>
<dbReference type="GO" id="GO:0005796">
    <property type="term" value="C:Golgi lumen"/>
    <property type="evidence" value="ECO:0007669"/>
    <property type="project" value="UniProtKB-SubCell"/>
</dbReference>
<dbReference type="GO" id="GO:0005886">
    <property type="term" value="C:plasma membrane"/>
    <property type="evidence" value="ECO:0000314"/>
    <property type="project" value="MGI"/>
</dbReference>
<dbReference type="GO" id="GO:0048237">
    <property type="term" value="C:rough endoplasmic reticulum lumen"/>
    <property type="evidence" value="ECO:0000314"/>
    <property type="project" value="UniProtKB"/>
</dbReference>
<dbReference type="GO" id="GO:0001540">
    <property type="term" value="F:amyloid-beta binding"/>
    <property type="evidence" value="ECO:0000304"/>
    <property type="project" value="ARUK-UCL"/>
</dbReference>
<dbReference type="GO" id="GO:0008201">
    <property type="term" value="F:heparin binding"/>
    <property type="evidence" value="ECO:0007669"/>
    <property type="project" value="UniProtKB-KW"/>
</dbReference>
<dbReference type="GO" id="GO:0035473">
    <property type="term" value="F:lipase binding"/>
    <property type="evidence" value="ECO:0000318"/>
    <property type="project" value="GO_Central"/>
</dbReference>
<dbReference type="GO" id="GO:0050750">
    <property type="term" value="F:low-density lipoprotein particle receptor binding"/>
    <property type="evidence" value="ECO:0000314"/>
    <property type="project" value="UniProtKB"/>
</dbReference>
<dbReference type="GO" id="GO:0048019">
    <property type="term" value="F:receptor antagonist activity"/>
    <property type="evidence" value="ECO:0000314"/>
    <property type="project" value="BHF-UCL"/>
</dbReference>
<dbReference type="GO" id="GO:0048018">
    <property type="term" value="F:receptor ligand activity"/>
    <property type="evidence" value="ECO:0000314"/>
    <property type="project" value="UniProtKB"/>
</dbReference>
<dbReference type="GO" id="GO:0005102">
    <property type="term" value="F:signaling receptor binding"/>
    <property type="evidence" value="ECO:0000304"/>
    <property type="project" value="ParkinsonsUK-UCL"/>
</dbReference>
<dbReference type="GO" id="GO:0070326">
    <property type="term" value="F:very-low-density lipoprotein particle receptor binding"/>
    <property type="evidence" value="ECO:0000353"/>
    <property type="project" value="BHF-UCL"/>
</dbReference>
<dbReference type="GO" id="GO:0150093">
    <property type="term" value="P:amyloid-beta clearance by transcytosis"/>
    <property type="evidence" value="ECO:0000315"/>
    <property type="project" value="ARUK-UCL"/>
</dbReference>
<dbReference type="GO" id="GO:1900116">
    <property type="term" value="P:extracellular negative regulation of signal transduction"/>
    <property type="evidence" value="ECO:0000304"/>
    <property type="project" value="ParkinsonsUK-UCL"/>
</dbReference>
<dbReference type="GO" id="GO:1900222">
    <property type="term" value="P:negative regulation of amyloid-beta clearance"/>
    <property type="evidence" value="ECO:0000316"/>
    <property type="project" value="BHF-UCL"/>
</dbReference>
<dbReference type="GO" id="GO:0032091">
    <property type="term" value="P:negative regulation of protein binding"/>
    <property type="evidence" value="ECO:0000314"/>
    <property type="project" value="BHF-UCL"/>
</dbReference>
<dbReference type="GO" id="GO:0002091">
    <property type="term" value="P:negative regulation of receptor internalization"/>
    <property type="evidence" value="ECO:0000316"/>
    <property type="project" value="ARUK-UCL"/>
</dbReference>
<dbReference type="GO" id="GO:0010916">
    <property type="term" value="P:negative regulation of very-low-density lipoprotein particle clearance"/>
    <property type="evidence" value="ECO:0000314"/>
    <property type="project" value="BHF-UCL"/>
</dbReference>
<dbReference type="GO" id="GO:1900223">
    <property type="term" value="P:positive regulation of amyloid-beta clearance"/>
    <property type="evidence" value="ECO:0000304"/>
    <property type="project" value="ARUK-UCL"/>
</dbReference>
<dbReference type="GO" id="GO:0048259">
    <property type="term" value="P:regulation of receptor-mediated endocytosis"/>
    <property type="evidence" value="ECO:0000314"/>
    <property type="project" value="UniProtKB"/>
</dbReference>
<dbReference type="GO" id="GO:0007165">
    <property type="term" value="P:signal transduction"/>
    <property type="evidence" value="ECO:0000314"/>
    <property type="project" value="UniProtKB"/>
</dbReference>
<dbReference type="CDD" id="cd14806">
    <property type="entry name" value="RAP_D1"/>
    <property type="match status" value="1"/>
</dbReference>
<dbReference type="CDD" id="cd14807">
    <property type="entry name" value="RAP_D2"/>
    <property type="match status" value="1"/>
</dbReference>
<dbReference type="CDD" id="cd14808">
    <property type="entry name" value="RAP_D3"/>
    <property type="match status" value="1"/>
</dbReference>
<dbReference type="FunFam" id="1.20.81.10:FF:000001">
    <property type="entry name" value="Alpha-2-macroglobulin receptor-associated protein"/>
    <property type="match status" value="1"/>
</dbReference>
<dbReference type="FunFam" id="1.20.81.10:FF:000003">
    <property type="entry name" value="Alpha-2-macroglobulin receptor-associated protein"/>
    <property type="match status" value="1"/>
</dbReference>
<dbReference type="FunFam" id="1.20.81.10:FF:000002">
    <property type="entry name" value="LDL receptor related protein associated protein 1"/>
    <property type="match status" value="1"/>
</dbReference>
<dbReference type="Gene3D" id="1.20.81.10">
    <property type="entry name" value="RAP domain"/>
    <property type="match status" value="3"/>
</dbReference>
<dbReference type="InterPro" id="IPR038003">
    <property type="entry name" value="A2-macroglobuin_RAP"/>
</dbReference>
<dbReference type="InterPro" id="IPR010483">
    <property type="entry name" value="Alpha_2_MRAP_C"/>
</dbReference>
<dbReference type="InterPro" id="IPR009066">
    <property type="entry name" value="MG_RAP_rcpt_1"/>
</dbReference>
<dbReference type="InterPro" id="IPR038001">
    <property type="entry name" value="RAP_D2"/>
</dbReference>
<dbReference type="InterPro" id="IPR037999">
    <property type="entry name" value="RAP_D3"/>
</dbReference>
<dbReference type="InterPro" id="IPR036744">
    <property type="entry name" value="RAP_sf"/>
</dbReference>
<dbReference type="PANTHER" id="PTHR16560">
    <property type="entry name" value="ALPHA-2-MACROGLOBULIN RECEPTOR-ASSOCIATED PROTEIN"/>
    <property type="match status" value="1"/>
</dbReference>
<dbReference type="PANTHER" id="PTHR16560:SF2">
    <property type="entry name" value="ALPHA-2-MACROGLOBULIN RECEPTOR-ASSOCIATED PROTEIN"/>
    <property type="match status" value="1"/>
</dbReference>
<dbReference type="Pfam" id="PF06401">
    <property type="entry name" value="Alpha-2-MRAP_C"/>
    <property type="match status" value="1"/>
</dbReference>
<dbReference type="Pfam" id="PF06400">
    <property type="entry name" value="Alpha-2-MRAP_N"/>
    <property type="match status" value="1"/>
</dbReference>
<dbReference type="SUPFAM" id="SSF47045">
    <property type="entry name" value="RAP domain-like"/>
    <property type="match status" value="3"/>
</dbReference>
<dbReference type="PROSITE" id="PS00014">
    <property type="entry name" value="ER_TARGET"/>
    <property type="match status" value="1"/>
</dbReference>
<feature type="signal peptide" evidence="3">
    <location>
        <begin position="1"/>
        <end position="34"/>
    </location>
</feature>
<feature type="chain" id="PRO_0000020724" description="Alpha-2-macroglobulin receptor-associated protein">
    <location>
        <begin position="35"/>
        <end position="357"/>
    </location>
</feature>
<feature type="region of interest" description="Disordered" evidence="4">
    <location>
        <begin position="32"/>
        <end position="52"/>
    </location>
</feature>
<feature type="region of interest" description="LDL receptor binding" evidence="3">
    <location>
        <begin position="237"/>
        <end position="353"/>
    </location>
</feature>
<feature type="coiled-coil region" evidence="3">
    <location>
        <begin position="219"/>
        <end position="310"/>
    </location>
</feature>
<feature type="short sequence motif" description="Prevents secretion from ER" evidence="19">
    <location>
        <begin position="354"/>
        <end position="357"/>
    </location>
</feature>
<feature type="compositionally biased region" description="Basic and acidic residues" evidence="4">
    <location>
        <begin position="35"/>
        <end position="52"/>
    </location>
</feature>
<feature type="modified residue" description="Phosphoserine" evidence="2">
    <location>
        <position position="50"/>
    </location>
</feature>
<feature type="modified residue" description="Phosphoserine" evidence="1">
    <location>
        <position position="135"/>
    </location>
</feature>
<feature type="modified residue" description="Phosphothreonine" evidence="24">
    <location>
        <position position="248"/>
    </location>
</feature>
<feature type="glycosylation site" description="N-linked (GlcNAc...) asparagine" evidence="15">
    <location>
        <position position="268"/>
    </location>
</feature>
<feature type="sequence variant" id="VAR_050660" description="In dbSNP:rs2228158.">
    <original>N</original>
    <variation>S</variation>
    <location>
        <position position="114"/>
    </location>
</feature>
<feature type="sequence variant" id="VAR_011821" description="In dbSNP:rs1800493." evidence="21">
    <original>V</original>
    <variation>M</variation>
    <location>
        <position position="311"/>
    </location>
</feature>
<feature type="mutagenesis site" description="Strongly reduced interaction with LRP1; when associated with A-291; A-293; A-302; A-307 and A-341." evidence="12">
    <original>H</original>
    <variation>A</variation>
    <location>
        <position position="283"/>
    </location>
</feature>
<feature type="mutagenesis site" description="Reduces competition with MAPT for binding to LRP1; when associated with A-304." evidence="18">
    <original>K</original>
    <variation>A</variation>
    <location>
        <position position="290"/>
    </location>
</feature>
<feature type="mutagenesis site" description="Strongly reduced interaction with LRP1; when associated with A-283; A-293; A-302; A-307 and A-341." evidence="12">
    <original>H</original>
    <variation>A</variation>
    <location>
        <position position="291"/>
    </location>
</feature>
<feature type="mutagenesis site" description="Strongly reduced interaction with LRP1; when associated with A-283; A-291; A-302; A-307 and A-341." evidence="12">
    <original>H</original>
    <variation>A</variation>
    <location>
        <position position="293"/>
    </location>
</feature>
<feature type="mutagenesis site" description="Strongly reduced interaction with LRP1; when associated with A-283; A-291; A-293; A-307 and A-341." evidence="12">
    <original>H</original>
    <variation>A</variation>
    <location>
        <position position="302"/>
    </location>
</feature>
<feature type="mutagenesis site" description="Reduces competition with MAPT for binding to LRP1; when associated with A-290." evidence="18">
    <original>K</original>
    <variation>A</variation>
    <location>
        <position position="304"/>
    </location>
</feature>
<feature type="mutagenesis site" description="Strongly reduced interaction with LRP1; when associated with A-283; A-291; A-293; A-302 and A-341." evidence="12">
    <original>H</original>
    <variation>A</variation>
    <location>
        <position position="307"/>
    </location>
</feature>
<feature type="mutagenesis site" description="Strongly reduced interaction with LRP1; when associated with A-283; A-291; A-293; A-302 and A-307." evidence="12">
    <original>H</original>
    <variation>A</variation>
    <location>
        <position position="341"/>
    </location>
</feature>
<feature type="sequence conflict" description="In Ref. 3; BAD96247." evidence="22" ref="3">
    <original>G</original>
    <variation>D</variation>
    <location>
        <position position="100"/>
    </location>
</feature>
<feature type="sequence conflict" description="In Ref. 3; BAD96224." evidence="22" ref="3">
    <original>V</original>
    <variation>A</variation>
    <location>
        <position position="183"/>
    </location>
</feature>
<feature type="sequence conflict" description="In Ref. 3; BAD96247." evidence="22" ref="3">
    <original>K</original>
    <variation>M</variation>
    <location>
        <position position="339"/>
    </location>
</feature>
<feature type="strand" evidence="25">
    <location>
        <begin position="53"/>
        <end position="56"/>
    </location>
</feature>
<feature type="helix" evidence="25">
    <location>
        <begin position="57"/>
        <end position="68"/>
    </location>
</feature>
<feature type="helix" evidence="25">
    <location>
        <begin position="73"/>
        <end position="99"/>
    </location>
</feature>
<feature type="helix" evidence="25">
    <location>
        <begin position="107"/>
        <end position="122"/>
    </location>
</feature>
<feature type="strand" evidence="26">
    <location>
        <begin position="124"/>
        <end position="126"/>
    </location>
</feature>
<feature type="strand" evidence="27">
    <location>
        <begin position="127"/>
        <end position="130"/>
    </location>
</feature>
<feature type="helix" evidence="30">
    <location>
        <begin position="149"/>
        <end position="161"/>
    </location>
</feature>
<feature type="helix" evidence="30">
    <location>
        <begin position="166"/>
        <end position="195"/>
    </location>
</feature>
<feature type="strand" evidence="30">
    <location>
        <begin position="208"/>
        <end position="210"/>
    </location>
</feature>
<feature type="strand" evidence="30">
    <location>
        <begin position="213"/>
        <end position="216"/>
    </location>
</feature>
<feature type="helix" evidence="30">
    <location>
        <begin position="217"/>
        <end position="243"/>
    </location>
</feature>
<feature type="strand" evidence="29">
    <location>
        <begin position="246"/>
        <end position="249"/>
    </location>
</feature>
<feature type="helix" evidence="28">
    <location>
        <begin position="255"/>
        <end position="265"/>
    </location>
</feature>
<feature type="helix" evidence="28">
    <location>
        <begin position="271"/>
        <end position="311"/>
    </location>
</feature>
<feature type="turn" evidence="28">
    <location>
        <begin position="314"/>
        <end position="316"/>
    </location>
</feature>
<feature type="helix" evidence="28">
    <location>
        <begin position="317"/>
        <end position="353"/>
    </location>
</feature>
<accession>P30533</accession>
<accession>D3DVR9</accession>
<accession>Q2M310</accession>
<accession>Q53HQ3</accession>
<accession>Q53HS6</accession>
<protein>
    <recommendedName>
        <fullName evidence="22">Alpha-2-macroglobulin receptor-associated protein</fullName>
        <shortName>Alpha-2-MRAP</shortName>
    </recommendedName>
    <alternativeName>
        <fullName>Low density lipoprotein receptor-related protein-associated protein 1</fullName>
        <shortName>RAP</shortName>
    </alternativeName>
</protein>
<name>AMRP_HUMAN</name>
<comment type="function">
    <text evidence="18 19">Molecular chaperone for LDL receptor-related proteins that may regulate their ligand binding activity along the secretory pathway.</text>
</comment>
<comment type="subunit">
    <text evidence="5 6 7 8 9 10 11 12 13 14 17 18 19 20">Interacts with the LRP1/alpha-2-macroglobulin receptor heavy and light chains; the interaction is transient and coincides with a reduction of ligand binding by the receptor (PubMed:1400426, PubMed:16678114, PubMed:16938309, PubMed:1712782, PubMed:32296178, PubMed:7774585). Interacts with LRP2/glycoprotein 330 (PubMed:1400426). Interacts with LRP1B; binding is followed by internalization and degradation (PubMed:11384978). Interacts with LDLR (PubMed:16630895). Interacts with SORL1 (PubMed:11294867, PubMed:12530537, PubMed:15053742, PubMed:15364913, PubMed:26858303, PubMed:8940146). Interacts with LRP1; this interaction is followed by rapid internalization (PubMed:15053742).</text>
</comment>
<comment type="interaction">
    <interactant intactId="EBI-715927">
        <id>P30533</id>
    </interactant>
    <interactant intactId="EBI-77613">
        <id>P05067</id>
        <label>APP</label>
    </interactant>
    <organismsDiffer>false</organismsDiffer>
    <experiments>3</experiments>
</comment>
<comment type="interaction">
    <interactant intactId="EBI-715927">
        <id>P30533</id>
    </interactant>
    <interactant intactId="EBI-12092171">
        <id>Q12797-6</id>
        <label>ASPH</label>
    </interactant>
    <organismsDiffer>false</organismsDiffer>
    <experiments>3</experiments>
</comment>
<comment type="interaction">
    <interactant intactId="EBI-715927">
        <id>P30533</id>
    </interactant>
    <interactant intactId="EBI-988319">
        <id>P01130</id>
        <label>LDLR</label>
    </interactant>
    <organismsDiffer>false</organismsDiffer>
    <experiments>4</experiments>
</comment>
<comment type="interaction">
    <interactant intactId="EBI-715927">
        <id>P30533</id>
    </interactant>
    <interactant intactId="EBI-1046087">
        <id>Q07954</id>
        <label>LRP1</label>
    </interactant>
    <organismsDiffer>false</organismsDiffer>
    <experiments>5</experiments>
</comment>
<comment type="interaction">
    <interactant intactId="EBI-715927">
        <id>P30533</id>
    </interactant>
    <interactant intactId="EBI-2681187">
        <id>Q14114</id>
        <label>LRP8</label>
    </interactant>
    <organismsDiffer>false</organismsDiffer>
    <experiments>2</experiments>
</comment>
<comment type="interaction">
    <interactant intactId="EBI-715927">
        <id>P30533</id>
    </interactant>
    <interactant intactId="EBI-1171329">
        <id>Q92673</id>
        <label>SORL1</label>
    </interactant>
    <organismsDiffer>false</organismsDiffer>
    <experiments>5</experiments>
</comment>
<comment type="interaction">
    <interactant intactId="EBI-715927">
        <id>P30533</id>
    </interactant>
    <interactant intactId="EBI-1057058">
        <id>Q99523</id>
        <label>SORT1</label>
    </interactant>
    <organismsDiffer>false</organismsDiffer>
    <experiments>5</experiments>
</comment>
<comment type="interaction">
    <interactant intactId="EBI-715927">
        <id>P30533</id>
    </interactant>
    <interactant intactId="EBI-9004309">
        <id>P98155</id>
        <label>VLDLR</label>
    </interactant>
    <organismsDiffer>false</organismsDiffer>
    <experiments>6</experiments>
</comment>
<comment type="subcellular location">
    <subcellularLocation>
        <location evidence="19">Rough endoplasmic reticulum lumen</location>
    </subcellularLocation>
    <subcellularLocation>
        <location evidence="19">Endoplasmic reticulum-Golgi intermediate compartment lumen</location>
    </subcellularLocation>
    <subcellularLocation>
        <location evidence="19">Golgi apparatus</location>
        <location evidence="19">cis-Golgi network</location>
    </subcellularLocation>
    <subcellularLocation>
        <location evidence="19">Golgi apparatus lumen</location>
    </subcellularLocation>
    <subcellularLocation>
        <location evidence="19">Endosome lumen</location>
    </subcellularLocation>
    <subcellularLocation>
        <location evidence="6">Cell surface</location>
    </subcellularLocation>
    <text evidence="6">May be associated with receptors at the cell surface.</text>
</comment>
<comment type="PTM">
    <text evidence="12 15 19">N-glycosylated.</text>
</comment>
<comment type="disease" evidence="16">
    <disease id="DI-03893">
        <name>Myopia 23, autosomal recessive</name>
        <acronym>MYP23</acronym>
        <description>A refractive error of the eye, in which parallel rays from a distant object come to focus in front of the retina, vision being better for near objects than for far.</description>
        <dbReference type="MIM" id="615431"/>
    </disease>
    <text>The disease is caused by variants affecting the gene represented in this entry.</text>
</comment>
<comment type="similarity">
    <text evidence="22">Belongs to the alpha-2-MRAP family.</text>
</comment>
<evidence type="ECO:0000250" key="1">
    <source>
        <dbReference type="UniProtKB" id="P55302"/>
    </source>
</evidence>
<evidence type="ECO:0000250" key="2">
    <source>
        <dbReference type="UniProtKB" id="Q99068"/>
    </source>
</evidence>
<evidence type="ECO:0000255" key="3"/>
<evidence type="ECO:0000256" key="4">
    <source>
        <dbReference type="SAM" id="MobiDB-lite"/>
    </source>
</evidence>
<evidence type="ECO:0000269" key="5">
    <source>
    </source>
</evidence>
<evidence type="ECO:0000269" key="6">
    <source>
    </source>
</evidence>
<evidence type="ECO:0000269" key="7">
    <source>
    </source>
</evidence>
<evidence type="ECO:0000269" key="8">
    <source>
    </source>
</evidence>
<evidence type="ECO:0000269" key="9">
    <source>
    </source>
</evidence>
<evidence type="ECO:0000269" key="10">
    <source>
    </source>
</evidence>
<evidence type="ECO:0000269" key="11">
    <source>
    </source>
</evidence>
<evidence type="ECO:0000269" key="12">
    <source>
    </source>
</evidence>
<evidence type="ECO:0000269" key="13">
    <source>
    </source>
</evidence>
<evidence type="ECO:0000269" key="14">
    <source>
    </source>
</evidence>
<evidence type="ECO:0000269" key="15">
    <source>
    </source>
</evidence>
<evidence type="ECO:0000269" key="16">
    <source>
    </source>
</evidence>
<evidence type="ECO:0000269" key="17">
    <source>
    </source>
</evidence>
<evidence type="ECO:0000269" key="18">
    <source>
    </source>
</evidence>
<evidence type="ECO:0000269" key="19">
    <source>
    </source>
</evidence>
<evidence type="ECO:0000269" key="20">
    <source>
    </source>
</evidence>
<evidence type="ECO:0000269" key="21">
    <source>
    </source>
</evidence>
<evidence type="ECO:0000305" key="22"/>
<evidence type="ECO:0000312" key="23">
    <source>
        <dbReference type="HGNC" id="HGNC:6701"/>
    </source>
</evidence>
<evidence type="ECO:0007744" key="24">
    <source>
    </source>
</evidence>
<evidence type="ECO:0007829" key="25">
    <source>
        <dbReference type="PDB" id="1LRE"/>
    </source>
</evidence>
<evidence type="ECO:0007829" key="26">
    <source>
        <dbReference type="PDB" id="1NRE"/>
    </source>
</evidence>
<evidence type="ECO:0007829" key="27">
    <source>
        <dbReference type="PDB" id="1OP1"/>
    </source>
</evidence>
<evidence type="ECO:0007829" key="28">
    <source>
        <dbReference type="PDB" id="2FCW"/>
    </source>
</evidence>
<evidence type="ECO:0007829" key="29">
    <source>
        <dbReference type="PDB" id="2FTU"/>
    </source>
</evidence>
<evidence type="ECO:0007829" key="30">
    <source>
        <dbReference type="PDB" id="2P01"/>
    </source>
</evidence>
<reference key="1">
    <citation type="journal article" date="1991" name="J. Biol. Chem.">
        <title>Primary structure of alpha 2-macroglobulin receptor-associated protein. Human homologue of a Heymann nephritis antigen.</title>
        <authorList>
            <person name="Strickland D.K."/>
            <person name="Ashcom J.D."/>
            <person name="Williams S."/>
            <person name="Battey F."/>
            <person name="Behre E."/>
            <person name="McTigue K."/>
            <person name="Battey J.F."/>
            <person name="Argraves W.S."/>
        </authorList>
    </citation>
    <scope>NUCLEOTIDE SEQUENCE [MRNA]</scope>
    <scope>PROTEIN SEQUENCE OF 183-195 AND 257-272</scope>
    <scope>INTERACTION WITH LRP1</scope>
    <source>
        <tissue>Placenta</tissue>
    </source>
</reference>
<reference key="2">
    <citation type="journal article" date="1998" name="Genomics">
        <title>Analysis of the human LRPAP1 gene coding for the lipoprotein receptor-associated protein: identification of 22 polymorphisms and one mutation.</title>
        <authorList>
            <person name="Van Leuven F."/>
            <person name="Thiry E."/>
            <person name="Stas L."/>
            <person name="Nelissen B."/>
        </authorList>
    </citation>
    <scope>NUCLEOTIDE SEQUENCE [GENOMIC DNA]</scope>
    <scope>VARIANT MET-311</scope>
</reference>
<reference key="3">
    <citation type="submission" date="2005-04" db="EMBL/GenBank/DDBJ databases">
        <authorList>
            <person name="Suzuki Y."/>
            <person name="Sugano S."/>
            <person name="Totoki Y."/>
            <person name="Toyoda A."/>
            <person name="Takeda T."/>
            <person name="Sakaki Y."/>
            <person name="Tanaka A."/>
            <person name="Yokoyama S."/>
        </authorList>
    </citation>
    <scope>NUCLEOTIDE SEQUENCE [LARGE SCALE MRNA]</scope>
    <source>
        <tissue>Adipose tissue</tissue>
    </source>
</reference>
<reference key="4">
    <citation type="journal article" date="2005" name="Nature">
        <title>Generation and annotation of the DNA sequences of human chromosomes 2 and 4.</title>
        <authorList>
            <person name="Hillier L.W."/>
            <person name="Graves T.A."/>
            <person name="Fulton R.S."/>
            <person name="Fulton L.A."/>
            <person name="Pepin K.H."/>
            <person name="Minx P."/>
            <person name="Wagner-McPherson C."/>
            <person name="Layman D."/>
            <person name="Wylie K."/>
            <person name="Sekhon M."/>
            <person name="Becker M.C."/>
            <person name="Fewell G.A."/>
            <person name="Delehaunty K.D."/>
            <person name="Miner T.L."/>
            <person name="Nash W.E."/>
            <person name="Kremitzki C."/>
            <person name="Oddy L."/>
            <person name="Du H."/>
            <person name="Sun H."/>
            <person name="Bradshaw-Cordum H."/>
            <person name="Ali J."/>
            <person name="Carter J."/>
            <person name="Cordes M."/>
            <person name="Harris A."/>
            <person name="Isak A."/>
            <person name="van Brunt A."/>
            <person name="Nguyen C."/>
            <person name="Du F."/>
            <person name="Courtney L."/>
            <person name="Kalicki J."/>
            <person name="Ozersky P."/>
            <person name="Abbott S."/>
            <person name="Armstrong J."/>
            <person name="Belter E.A."/>
            <person name="Caruso L."/>
            <person name="Cedroni M."/>
            <person name="Cotton M."/>
            <person name="Davidson T."/>
            <person name="Desai A."/>
            <person name="Elliott G."/>
            <person name="Erb T."/>
            <person name="Fronick C."/>
            <person name="Gaige T."/>
            <person name="Haakenson W."/>
            <person name="Haglund K."/>
            <person name="Holmes A."/>
            <person name="Harkins R."/>
            <person name="Kim K."/>
            <person name="Kruchowski S.S."/>
            <person name="Strong C.M."/>
            <person name="Grewal N."/>
            <person name="Goyea E."/>
            <person name="Hou S."/>
            <person name="Levy A."/>
            <person name="Martinka S."/>
            <person name="Mead K."/>
            <person name="McLellan M.D."/>
            <person name="Meyer R."/>
            <person name="Randall-Maher J."/>
            <person name="Tomlinson C."/>
            <person name="Dauphin-Kohlberg S."/>
            <person name="Kozlowicz-Reilly A."/>
            <person name="Shah N."/>
            <person name="Swearengen-Shahid S."/>
            <person name="Snider J."/>
            <person name="Strong J.T."/>
            <person name="Thompson J."/>
            <person name="Yoakum M."/>
            <person name="Leonard S."/>
            <person name="Pearman C."/>
            <person name="Trani L."/>
            <person name="Radionenko M."/>
            <person name="Waligorski J.E."/>
            <person name="Wang C."/>
            <person name="Rock S.M."/>
            <person name="Tin-Wollam A.-M."/>
            <person name="Maupin R."/>
            <person name="Latreille P."/>
            <person name="Wendl M.C."/>
            <person name="Yang S.-P."/>
            <person name="Pohl C."/>
            <person name="Wallis J.W."/>
            <person name="Spieth J."/>
            <person name="Bieri T.A."/>
            <person name="Berkowicz N."/>
            <person name="Nelson J.O."/>
            <person name="Osborne J."/>
            <person name="Ding L."/>
            <person name="Meyer R."/>
            <person name="Sabo A."/>
            <person name="Shotland Y."/>
            <person name="Sinha P."/>
            <person name="Wohldmann P.E."/>
            <person name="Cook L.L."/>
            <person name="Hickenbotham M.T."/>
            <person name="Eldred J."/>
            <person name="Williams D."/>
            <person name="Jones T.A."/>
            <person name="She X."/>
            <person name="Ciccarelli F.D."/>
            <person name="Izaurralde E."/>
            <person name="Taylor J."/>
            <person name="Schmutz J."/>
            <person name="Myers R.M."/>
            <person name="Cox D.R."/>
            <person name="Huang X."/>
            <person name="McPherson J.D."/>
            <person name="Mardis E.R."/>
            <person name="Clifton S.W."/>
            <person name="Warren W.C."/>
            <person name="Chinwalla A.T."/>
            <person name="Eddy S.R."/>
            <person name="Marra M.A."/>
            <person name="Ovcharenko I."/>
            <person name="Furey T.S."/>
            <person name="Miller W."/>
            <person name="Eichler E.E."/>
            <person name="Bork P."/>
            <person name="Suyama M."/>
            <person name="Torrents D."/>
            <person name="Waterston R.H."/>
            <person name="Wilson R.K."/>
        </authorList>
    </citation>
    <scope>NUCLEOTIDE SEQUENCE [LARGE SCALE GENOMIC DNA]</scope>
</reference>
<reference key="5">
    <citation type="submission" date="2005-09" db="EMBL/GenBank/DDBJ databases">
        <authorList>
            <person name="Mural R.J."/>
            <person name="Istrail S."/>
            <person name="Sutton G.G."/>
            <person name="Florea L."/>
            <person name="Halpern A.L."/>
            <person name="Mobarry C.M."/>
            <person name="Lippert R."/>
            <person name="Walenz B."/>
            <person name="Shatkay H."/>
            <person name="Dew I."/>
            <person name="Miller J.R."/>
            <person name="Flanigan M.J."/>
            <person name="Edwards N.J."/>
            <person name="Bolanos R."/>
            <person name="Fasulo D."/>
            <person name="Halldorsson B.V."/>
            <person name="Hannenhalli S."/>
            <person name="Turner R."/>
            <person name="Yooseph S."/>
            <person name="Lu F."/>
            <person name="Nusskern D.R."/>
            <person name="Shue B.C."/>
            <person name="Zheng X.H."/>
            <person name="Zhong F."/>
            <person name="Delcher A.L."/>
            <person name="Huson D.H."/>
            <person name="Kravitz S.A."/>
            <person name="Mouchard L."/>
            <person name="Reinert K."/>
            <person name="Remington K.A."/>
            <person name="Clark A.G."/>
            <person name="Waterman M.S."/>
            <person name="Eichler E.E."/>
            <person name="Adams M.D."/>
            <person name="Hunkapiller M.W."/>
            <person name="Myers E.W."/>
            <person name="Venter J.C."/>
        </authorList>
    </citation>
    <scope>NUCLEOTIDE SEQUENCE [LARGE SCALE GENOMIC DNA]</scope>
</reference>
<reference key="6">
    <citation type="journal article" date="2004" name="Genome Res.">
        <title>The status, quality, and expansion of the NIH full-length cDNA project: the Mammalian Gene Collection (MGC).</title>
        <authorList>
            <consortium name="The MGC Project Team"/>
        </authorList>
    </citation>
    <scope>NUCLEOTIDE SEQUENCE [LARGE SCALE MRNA]</scope>
    <source>
        <tissue>Brain</tissue>
    </source>
</reference>
<reference key="7">
    <citation type="journal article" date="1995" name="Genomics">
        <title>Cloning, characterization, and chromosomal localization to 4p16 of the human gene (LRPAP1) coding for the alpha 2-macroglobulin receptor-associated protein and structural comparison with the murine gene coding for the 44-kDa heparin-binding protein.</title>
        <authorList>
            <person name="Van Leuven F."/>
            <person name="Hilliker C."/>
            <person name="Serneels L."/>
            <person name="Umans L."/>
            <person name="Overbergh L."/>
            <person name="Strooper B."/>
            <person name="Fryns J.-P."/>
            <person name="Van den Berghe H."/>
        </authorList>
    </citation>
    <scope>NUCLEOTIDE SEQUENCE [GENOMIC DNA] OF 204-250</scope>
</reference>
<reference key="8">
    <citation type="journal article" date="1992" name="J. Biol. Chem.">
        <title>The 39-kDa receptor-associated protein interacts with two members of the low density lipoprotein receptor family, alpha 2-macroglobulin receptor and glycoprotein 330.</title>
        <authorList>
            <person name="Kounnas M.Z."/>
            <person name="Argraves W.S."/>
            <person name="Strickland D.K."/>
        </authorList>
    </citation>
    <scope>CHARACTERIZATION</scope>
    <scope>INTERACTION WITH LRP1 AND LRP2</scope>
</reference>
<reference key="9">
    <citation type="journal article" date="1995" name="EMBO J.">
        <title>39 kDa receptor-associated protein is an ER resident protein and molecular chaperone for LDL receptor-related protein.</title>
        <authorList>
            <person name="Bu G."/>
            <person name="Geuze H.J."/>
            <person name="Strous G.J."/>
            <person name="Schwartz A.L."/>
        </authorList>
    </citation>
    <scope>FUNCTION</scope>
    <scope>SUBCELLULAR LOCATION</scope>
    <scope>INTERACTION WITH LRP1</scope>
    <scope>MOTIF</scope>
    <scope>GLYCOSYLATION</scope>
</reference>
<reference key="10">
    <citation type="journal article" date="1996" name="J. Biol. Chem.">
        <title>Molecular characterization of a novel human hybrid-type receptor that binds the alpha2-macroglobulin receptor-associated protein.</title>
        <authorList>
            <person name="Jacobsen L."/>
            <person name="Madsen P."/>
            <person name="Moestrup S.K."/>
            <person name="Lund A.H."/>
            <person name="Tommerup N."/>
            <person name="Nykjaer A."/>
            <person name="Sottrup-Jensen L."/>
            <person name="Gliemann J."/>
            <person name="Petersen C.M."/>
        </authorList>
    </citation>
    <scope>INTERACTION WITH SORL1</scope>
</reference>
<reference key="11">
    <citation type="journal article" date="2001" name="J. Biol. Chem.">
        <title>Activation and functional characterization of the mosaic receptor SorLA/LR11.</title>
        <authorList>
            <person name="Jacobsen L."/>
            <person name="Madsen P."/>
            <person name="Jacobsen C."/>
            <person name="Nielsen M.S."/>
            <person name="Gliemann J."/>
            <person name="Petersen C.M."/>
        </authorList>
    </citation>
    <scope>INTERACTION WITH SORL1</scope>
</reference>
<reference key="12">
    <citation type="journal article" date="2001" name="J. Biol. Chem.">
        <title>The putative tumor suppressor LRP1B, a novel member of the low density lipoprotein (LDL) receptor family, exhibits both overlapping and distinct properties with the LDL receptor-related protein.</title>
        <authorList>
            <person name="Liu C.-X."/>
            <person name="Li Y."/>
            <person name="Obermoeller-McCormick L.M."/>
            <person name="Schwartz A.L."/>
            <person name="Bu G."/>
        </authorList>
    </citation>
    <scope>INTERACTION WITH LRP1B</scope>
    <scope>SUBCELLULAR LOCATION</scope>
</reference>
<reference key="13">
    <citation type="journal article" date="2002" name="Biol. Chem.">
        <title>Characterization of the VPS10 domain of SorLA/LR11 as binding site for the neuropeptide HA.</title>
        <authorList>
            <person name="Lintzel J."/>
            <person name="Franke I."/>
            <person name="Riedel I.B."/>
            <person name="Schaller H.C."/>
            <person name="Hampe W."/>
        </authorList>
    </citation>
    <scope>INTERACTION WITH SORL1</scope>
</reference>
<reference key="14">
    <citation type="journal article" date="2004" name="Biochem. J.">
        <title>The mosaic receptor sorLA/LR11 binds components of the plasminogen-activating system and platelet-derived growth factor-BB similarly to LRP1 (low-density lipoprotein receptor-related protein), but mediates slow internalization of bound ligand.</title>
        <authorList>
            <person name="Gliemann J."/>
            <person name="Hermey G."/>
            <person name="Nykjaer A."/>
            <person name="Petersen C.M."/>
            <person name="Jacobsen C."/>
            <person name="Andreasen P.A."/>
        </authorList>
    </citation>
    <scope>INTERACTION WITH LRP1 AND SORL1</scope>
</reference>
<reference key="15">
    <citation type="journal article" date="2004" name="J. Biol. Chem.">
        <title>Functional organization of the sortilin Vps10p domain.</title>
        <authorList>
            <person name="Westergaard U.B."/>
            <person name="Soerensen E.S."/>
            <person name="Hermey G."/>
            <person name="Nielsen M.S."/>
            <person name="Nykjaer A."/>
            <person name="Kirkegaard K."/>
            <person name="Jacobsen C."/>
            <person name="Gliemann J."/>
            <person name="Madsen P."/>
            <person name="Petersen C.M."/>
        </authorList>
    </citation>
    <scope>INTERACTION WITH SORL1</scope>
</reference>
<reference key="16">
    <citation type="journal article" date="2009" name="J. Proteome Res.">
        <title>Glycoproteomics analysis of human liver tissue by combination of multiple enzyme digestion and hydrazide chemistry.</title>
        <authorList>
            <person name="Chen R."/>
            <person name="Jiang X."/>
            <person name="Sun D."/>
            <person name="Han G."/>
            <person name="Wang F."/>
            <person name="Ye M."/>
            <person name="Wang L."/>
            <person name="Zou H."/>
        </authorList>
    </citation>
    <scope>GLYCOSYLATION [LARGE SCALE ANALYSIS] AT ASN-268</scope>
    <source>
        <tissue>Liver</tissue>
    </source>
</reference>
<reference key="17">
    <citation type="journal article" date="2011" name="BMC Syst. Biol.">
        <title>Initial characterization of the human central proteome.</title>
        <authorList>
            <person name="Burkard T.R."/>
            <person name="Planyavsky M."/>
            <person name="Kaupe I."/>
            <person name="Breitwieser F.P."/>
            <person name="Buerckstuemmer T."/>
            <person name="Bennett K.L."/>
            <person name="Superti-Furga G."/>
            <person name="Colinge J."/>
        </authorList>
    </citation>
    <scope>IDENTIFICATION BY MASS SPECTROMETRY [LARGE SCALE ANALYSIS]</scope>
</reference>
<reference key="18">
    <citation type="journal article" date="2013" name="Am. J. Hum. Genet.">
        <title>Mutations in LRPAP1 are associated with severe myopia in humans.</title>
        <authorList>
            <person name="Aldahmesh M.A."/>
            <person name="Khan A.O."/>
            <person name="Alkuraya H."/>
            <person name="Adly N."/>
            <person name="Anazi S."/>
            <person name="Al-Saleh A.A."/>
            <person name="Mohamed J.Y."/>
            <person name="Hijazi H."/>
            <person name="Prabakaran S."/>
            <person name="Tacke M."/>
            <person name="Al-Khrashi A."/>
            <person name="Hashem M."/>
            <person name="Reinheckel T."/>
            <person name="Assiri A."/>
            <person name="Alkuraya F.S."/>
        </authorList>
    </citation>
    <scope>INVOLVEMENT IN MYP23</scope>
</reference>
<reference key="19">
    <citation type="journal article" date="2014" name="J. Proteomics">
        <title>An enzyme assisted RP-RPLC approach for in-depth analysis of human liver phosphoproteome.</title>
        <authorList>
            <person name="Bian Y."/>
            <person name="Song C."/>
            <person name="Cheng K."/>
            <person name="Dong M."/>
            <person name="Wang F."/>
            <person name="Huang J."/>
            <person name="Sun D."/>
            <person name="Wang L."/>
            <person name="Ye M."/>
            <person name="Zou H."/>
        </authorList>
    </citation>
    <scope>PHOSPHORYLATION [LARGE SCALE ANALYSIS] AT THR-248</scope>
    <scope>IDENTIFICATION BY MASS SPECTROMETRY [LARGE SCALE ANALYSIS]</scope>
    <source>
        <tissue>Liver</tissue>
    </source>
</reference>
<reference key="20">
    <citation type="journal article" date="2015" name="Proteomics">
        <title>N-terminome analysis of the human mitochondrial proteome.</title>
        <authorList>
            <person name="Vaca Jacome A.S."/>
            <person name="Rabilloud T."/>
            <person name="Schaeffer-Reiss C."/>
            <person name="Rompais M."/>
            <person name="Ayoub D."/>
            <person name="Lane L."/>
            <person name="Bairoch A."/>
            <person name="Van Dorsselaer A."/>
            <person name="Carapito C."/>
        </authorList>
    </citation>
    <scope>IDENTIFICATION BY MASS SPECTROMETRY [LARGE SCALE ANALYSIS]</scope>
</reference>
<reference key="21">
    <citation type="journal article" date="2016" name="Mol. Cell. Biol.">
        <title>Cytokine-like factor 1, an essential facilitator of cardiotrophin-like cytokine:ciliary neurotrophic factor receptor alpha signaling and sorLA-mediated turnover.</title>
        <authorList>
            <person name="Larsen J.V."/>
            <person name="Kristensen A.M."/>
            <person name="Pallesen L.T."/>
            <person name="Bauer J."/>
            <person name="Vaegter C.B."/>
            <person name="Nielsen M.S."/>
            <person name="Madsen P."/>
            <person name="Petersen C.M."/>
        </authorList>
    </citation>
    <scope>INTERACTION WITH SORL1</scope>
</reference>
<reference key="22">
    <citation type="journal article" date="2020" name="Nature">
        <title>LRP1 is a master regulator of tau uptake and spread.</title>
        <authorList>
            <person name="Rauch J.N."/>
            <person name="Luna G."/>
            <person name="Guzman E."/>
            <person name="Challis C."/>
            <person name="Sibih Y.E."/>
            <person name="Leshuk C."/>
            <person name="Hernandez I."/>
            <person name="Wegmann S."/>
            <person name="Hyman B.T."/>
            <person name="Gradinaru V."/>
            <person name="Kampmann M."/>
            <person name="Kosik K.S."/>
        </authorList>
    </citation>
    <scope>INTERACTION WITH LRP1</scope>
    <scope>MUTAGENESIS OF LYS-290 AND LYS-304</scope>
    <scope>FUNCTION</scope>
</reference>
<reference key="23">
    <citation type="journal article" date="1997" name="Proc. Natl. Acad. Sci. U.S.A.">
        <title>The solution structure of the N-terminal domain of alpha2-macroglobulin receptor-associated protein.</title>
        <authorList>
            <person name="Nielsen P.R."/>
            <person name="Ellgaard L."/>
            <person name="Etzerodt M."/>
            <person name="Thoegersen H.C."/>
            <person name="Poulsen F.M."/>
        </authorList>
    </citation>
    <scope>STRUCTURE BY NMR OF 51-131</scope>
</reference>
<reference key="24">
    <citation type="journal article" date="2003" name="J. Biomol. NMR">
        <title>1H, 13C and 15N resonance assignments of domain 1 of receptor associated protein.</title>
        <authorList>
            <person name="Wu Y."/>
            <person name="Migliorini M."/>
            <person name="Yu P."/>
            <person name="Strickland D.K."/>
            <person name="Wang Y.-X."/>
        </authorList>
    </citation>
    <scope>STRUCTURE BY NMR OF 51-132</scope>
</reference>
<reference key="25">
    <citation type="journal article" date="2006" name="J. Mol. Biol.">
        <title>Binding site structure of one LRP-RAP complex: implications for a common ligand-receptor binding motif.</title>
        <authorList>
            <person name="Jensen G.A."/>
            <person name="Andersen O.M.J.J."/>
            <person name="Bonvin A.M."/>
            <person name="Bjerrum-Bohr I."/>
            <person name="Etzerodt M."/>
            <person name="Thoegersen H.C."/>
            <person name="O'Shea C."/>
            <person name="Poulsen F.M."/>
            <person name="Kragelund B.B."/>
        </authorList>
    </citation>
    <scope>STRUCTURE BY NMR OF 51-131 IN COMPLEX WITH LRP1</scope>
</reference>
<reference key="26">
    <citation type="journal article" date="2006" name="Mol. Cell">
        <title>Structure of an LDLR-RAP complex reveals a general mode for ligand recognition by lipoprotein receptors.</title>
        <authorList>
            <person name="Fisher C."/>
            <person name="Beglova N."/>
            <person name="Blacklow S.C."/>
        </authorList>
    </citation>
    <scope>X-RAY CRYSTALLOGRAPHY (1.26 ANGSTROMS) OF 250-357 IN COMPLEX WITH LDLR</scope>
    <scope>INTERACTION WITH LDLR</scope>
</reference>
<reference key="27">
    <citation type="journal article" date="2006" name="Mol. Cell">
        <title>RAP uses a histidine switch to regulate its interaction with LRP in the ER and Golgi.</title>
        <authorList>
            <person name="Lee D."/>
            <person name="Walsh J.D."/>
            <person name="Mikhailenko I."/>
            <person name="Yu P."/>
            <person name="Migliorini M."/>
            <person name="Wu Y."/>
            <person name="Krueger S."/>
            <person name="Curtis J.E."/>
            <person name="Harris B."/>
            <person name="Lockett S."/>
            <person name="Blacklow S.C."/>
            <person name="Strickland D.K."/>
            <person name="Wang Y.-X."/>
        </authorList>
    </citation>
    <scope>STRUCTURE BY NMR OF 240-357</scope>
    <scope>INTERACTION WITH LRP1</scope>
    <scope>SUBCELLULAR LOCATION</scope>
    <scope>GLYCOSYLATION</scope>
    <scope>MUTAGENESIS OF HIS-283; HIS-291; HIS-293; HIS-302; HIS-307 AND HIS-341</scope>
</reference>
<keyword id="KW-0002">3D-structure</keyword>
<keyword id="KW-0175">Coiled coil</keyword>
<keyword id="KW-0903">Direct protein sequencing</keyword>
<keyword id="KW-0256">Endoplasmic reticulum</keyword>
<keyword id="KW-0967">Endosome</keyword>
<keyword id="KW-0325">Glycoprotein</keyword>
<keyword id="KW-0333">Golgi apparatus</keyword>
<keyword id="KW-0358">Heparin-binding</keyword>
<keyword id="KW-0597">Phosphoprotein</keyword>
<keyword id="KW-1267">Proteomics identification</keyword>
<keyword id="KW-1185">Reference proteome</keyword>
<keyword id="KW-0732">Signal</keyword>
<proteinExistence type="evidence at protein level"/>
<organism>
    <name type="scientific">Homo sapiens</name>
    <name type="common">Human</name>
    <dbReference type="NCBI Taxonomy" id="9606"/>
    <lineage>
        <taxon>Eukaryota</taxon>
        <taxon>Metazoa</taxon>
        <taxon>Chordata</taxon>
        <taxon>Craniata</taxon>
        <taxon>Vertebrata</taxon>
        <taxon>Euteleostomi</taxon>
        <taxon>Mammalia</taxon>
        <taxon>Eutheria</taxon>
        <taxon>Euarchontoglires</taxon>
        <taxon>Primates</taxon>
        <taxon>Haplorrhini</taxon>
        <taxon>Catarrhini</taxon>
        <taxon>Hominidae</taxon>
        <taxon>Homo</taxon>
    </lineage>
</organism>
<gene>
    <name evidence="23" type="primary">LRPAP1</name>
    <name type="synonym">A2MRAP</name>
</gene>